<comment type="function">
    <text evidence="1">Specifically phosphorylates the agonist-occupied form of the beta-adrenergic and closely related receptors.</text>
</comment>
<comment type="catalytic activity">
    <reaction evidence="1">
        <text>[beta-adrenergic receptor] + ATP = [beta-adrenergic receptor]-phosphate + ADP + H(+)</text>
        <dbReference type="Rhea" id="RHEA:19429"/>
        <dbReference type="Rhea" id="RHEA-COMP:11222"/>
        <dbReference type="Rhea" id="RHEA-COMP:11223"/>
        <dbReference type="ChEBI" id="CHEBI:15378"/>
        <dbReference type="ChEBI" id="CHEBI:30616"/>
        <dbReference type="ChEBI" id="CHEBI:43176"/>
        <dbReference type="ChEBI" id="CHEBI:68546"/>
        <dbReference type="ChEBI" id="CHEBI:456216"/>
        <dbReference type="EC" id="2.7.11.15"/>
    </reaction>
    <physiologicalReaction direction="left-to-right" evidence="1">
        <dbReference type="Rhea" id="RHEA:19430"/>
    </physiologicalReaction>
</comment>
<comment type="subunit">
    <text evidence="1">Interacts with GIT1.</text>
</comment>
<comment type="subcellular location">
    <subcellularLocation>
        <location evidence="1">Postsynapse</location>
    </subcellularLocation>
    <subcellularLocation>
        <location evidence="1">Presynapse</location>
    </subcellularLocation>
</comment>
<comment type="tissue specificity">
    <text>Ubiquitous; brain, spleen &gt; heart, lung &gt; kidney.</text>
</comment>
<comment type="PTM">
    <text evidence="2">Ubiquitinated.</text>
</comment>
<comment type="similarity">
    <text evidence="9">Belongs to the protein kinase superfamily. AGC Ser/Thr protein kinase family. GPRK subfamily.</text>
</comment>
<organism>
    <name type="scientific">Bos taurus</name>
    <name type="common">Bovine</name>
    <dbReference type="NCBI Taxonomy" id="9913"/>
    <lineage>
        <taxon>Eukaryota</taxon>
        <taxon>Metazoa</taxon>
        <taxon>Chordata</taxon>
        <taxon>Craniata</taxon>
        <taxon>Vertebrata</taxon>
        <taxon>Euteleostomi</taxon>
        <taxon>Mammalia</taxon>
        <taxon>Eutheria</taxon>
        <taxon>Laurasiatheria</taxon>
        <taxon>Artiodactyla</taxon>
        <taxon>Ruminantia</taxon>
        <taxon>Pecora</taxon>
        <taxon>Bovidae</taxon>
        <taxon>Bovinae</taxon>
        <taxon>Bos</taxon>
    </lineage>
</organism>
<accession>P26818</accession>
<name>ARBK2_BOVIN</name>
<dbReference type="EC" id="2.7.11.15" evidence="1"/>
<dbReference type="EMBL" id="M73216">
    <property type="protein sequence ID" value="AAA30406.1"/>
    <property type="molecule type" value="mRNA"/>
</dbReference>
<dbReference type="PIR" id="A39336">
    <property type="entry name" value="A39336"/>
</dbReference>
<dbReference type="RefSeq" id="NP_776925.1">
    <property type="nucleotide sequence ID" value="NM_174500.2"/>
</dbReference>
<dbReference type="SMR" id="P26818"/>
<dbReference type="FunCoup" id="P26818">
    <property type="interactions" value="1604"/>
</dbReference>
<dbReference type="STRING" id="9913.ENSBTAP00000000005"/>
<dbReference type="BindingDB" id="P26818"/>
<dbReference type="ChEMBL" id="CHEMBL3711487"/>
<dbReference type="PaxDb" id="9913-ENSBTAP00000000005"/>
<dbReference type="GeneID" id="282136"/>
<dbReference type="KEGG" id="bta:282136"/>
<dbReference type="CTD" id="157"/>
<dbReference type="VEuPathDB" id="HostDB:ENSBTAG00000000005"/>
<dbReference type="eggNOG" id="KOG0986">
    <property type="taxonomic scope" value="Eukaryota"/>
</dbReference>
<dbReference type="HOGENOM" id="CLU_000288_63_41_1"/>
<dbReference type="InParanoid" id="P26818"/>
<dbReference type="OMA" id="LHTHTHD"/>
<dbReference type="OrthoDB" id="354826at2759"/>
<dbReference type="BRENDA" id="2.7.11.15">
    <property type="organism ID" value="908"/>
</dbReference>
<dbReference type="Reactome" id="R-BTA-418555">
    <property type="pathway name" value="G alpha (s) signalling events"/>
</dbReference>
<dbReference type="Reactome" id="R-BTA-8856825">
    <property type="pathway name" value="Cargo recognition for clathrin-mediated endocytosis"/>
</dbReference>
<dbReference type="Proteomes" id="UP000009136">
    <property type="component" value="Chromosome 17"/>
</dbReference>
<dbReference type="Bgee" id="ENSBTAG00000000005">
    <property type="expression patterns" value="Expressed in monocyte and 104 other cell types or tissues"/>
</dbReference>
<dbReference type="GO" id="GO:0042995">
    <property type="term" value="C:cell projection"/>
    <property type="evidence" value="ECO:0007669"/>
    <property type="project" value="UniProtKB-KW"/>
</dbReference>
<dbReference type="GO" id="GO:0098794">
    <property type="term" value="C:postsynapse"/>
    <property type="evidence" value="ECO:0007669"/>
    <property type="project" value="UniProtKB-SubCell"/>
</dbReference>
<dbReference type="GO" id="GO:0098793">
    <property type="term" value="C:presynapse"/>
    <property type="evidence" value="ECO:0007669"/>
    <property type="project" value="UniProtKB-SubCell"/>
</dbReference>
<dbReference type="GO" id="GO:0005524">
    <property type="term" value="F:ATP binding"/>
    <property type="evidence" value="ECO:0007669"/>
    <property type="project" value="UniProtKB-KW"/>
</dbReference>
<dbReference type="GO" id="GO:0047696">
    <property type="term" value="F:beta-adrenergic receptor kinase activity"/>
    <property type="evidence" value="ECO:0007669"/>
    <property type="project" value="UniProtKB-EC"/>
</dbReference>
<dbReference type="GO" id="GO:0001664">
    <property type="term" value="F:G protein-coupled receptor binding"/>
    <property type="evidence" value="ECO:0000318"/>
    <property type="project" value="GO_Central"/>
</dbReference>
<dbReference type="GO" id="GO:0004703">
    <property type="term" value="F:G protein-coupled receptor kinase activity"/>
    <property type="evidence" value="ECO:0000318"/>
    <property type="project" value="GO_Central"/>
</dbReference>
<dbReference type="GO" id="GO:0002029">
    <property type="term" value="P:desensitization of G protein-coupled receptor signaling pathway"/>
    <property type="evidence" value="ECO:0000318"/>
    <property type="project" value="GO_Central"/>
</dbReference>
<dbReference type="GO" id="GO:0007186">
    <property type="term" value="P:G protein-coupled receptor signaling pathway"/>
    <property type="evidence" value="ECO:0000318"/>
    <property type="project" value="GO_Central"/>
</dbReference>
<dbReference type="CDD" id="cd01240">
    <property type="entry name" value="PH_GRK2_subgroup"/>
    <property type="match status" value="1"/>
</dbReference>
<dbReference type="CDD" id="cd08747">
    <property type="entry name" value="RGS_GRK2_GRK3"/>
    <property type="match status" value="1"/>
</dbReference>
<dbReference type="CDD" id="cd05633">
    <property type="entry name" value="STKc_GRK3"/>
    <property type="match status" value="1"/>
</dbReference>
<dbReference type="FunFam" id="1.10.510.10:FF:000118">
    <property type="entry name" value="G protein-coupled receptor kinase"/>
    <property type="match status" value="1"/>
</dbReference>
<dbReference type="FunFam" id="2.30.29.30:FF:000084">
    <property type="entry name" value="G protein-coupled receptor kinase"/>
    <property type="match status" value="1"/>
</dbReference>
<dbReference type="FunFam" id="3.30.200.20:FF:000068">
    <property type="entry name" value="G protein-coupled receptor kinase"/>
    <property type="match status" value="1"/>
</dbReference>
<dbReference type="Gene3D" id="3.30.200.20">
    <property type="entry name" value="Phosphorylase Kinase, domain 1"/>
    <property type="match status" value="1"/>
</dbReference>
<dbReference type="Gene3D" id="2.30.29.30">
    <property type="entry name" value="Pleckstrin-homology domain (PH domain)/Phosphotyrosine-binding domain (PTB)"/>
    <property type="match status" value="1"/>
</dbReference>
<dbReference type="Gene3D" id="1.10.167.10">
    <property type="entry name" value="Regulator of G-protein Signalling 4, domain 2"/>
    <property type="match status" value="1"/>
</dbReference>
<dbReference type="Gene3D" id="1.10.510.10">
    <property type="entry name" value="Transferase(Phosphotransferase) domain 1"/>
    <property type="match status" value="1"/>
</dbReference>
<dbReference type="InterPro" id="IPR000961">
    <property type="entry name" value="AGC-kinase_C"/>
</dbReference>
<dbReference type="InterPro" id="IPR000239">
    <property type="entry name" value="GPCR_kinase"/>
</dbReference>
<dbReference type="InterPro" id="IPR011009">
    <property type="entry name" value="Kinase-like_dom_sf"/>
</dbReference>
<dbReference type="InterPro" id="IPR011993">
    <property type="entry name" value="PH-like_dom_sf"/>
</dbReference>
<dbReference type="InterPro" id="IPR001849">
    <property type="entry name" value="PH_domain"/>
</dbReference>
<dbReference type="InterPro" id="IPR000719">
    <property type="entry name" value="Prot_kinase_dom"/>
</dbReference>
<dbReference type="InterPro" id="IPR017441">
    <property type="entry name" value="Protein_kinase_ATP_BS"/>
</dbReference>
<dbReference type="InterPro" id="IPR016137">
    <property type="entry name" value="RGS"/>
</dbReference>
<dbReference type="InterPro" id="IPR036305">
    <property type="entry name" value="RGS_sf"/>
</dbReference>
<dbReference type="InterPro" id="IPR044926">
    <property type="entry name" value="RGS_subdomain_2"/>
</dbReference>
<dbReference type="InterPro" id="IPR008271">
    <property type="entry name" value="Ser/Thr_kinase_AS"/>
</dbReference>
<dbReference type="PANTHER" id="PTHR24355:SF17">
    <property type="entry name" value="BETA-ADRENERGIC RECEPTOR KINASE 2"/>
    <property type="match status" value="1"/>
</dbReference>
<dbReference type="PANTHER" id="PTHR24355">
    <property type="entry name" value="G PROTEIN-COUPLED RECEPTOR KINASE/RIBOSOMAL PROTEIN S6 KINASE"/>
    <property type="match status" value="1"/>
</dbReference>
<dbReference type="Pfam" id="PF00169">
    <property type="entry name" value="PH"/>
    <property type="match status" value="1"/>
</dbReference>
<dbReference type="Pfam" id="PF00069">
    <property type="entry name" value="Pkinase"/>
    <property type="match status" value="1"/>
</dbReference>
<dbReference type="Pfam" id="PF00615">
    <property type="entry name" value="RGS"/>
    <property type="match status" value="1"/>
</dbReference>
<dbReference type="PRINTS" id="PR00717">
    <property type="entry name" value="GPCRKINASE"/>
</dbReference>
<dbReference type="SMART" id="SM00233">
    <property type="entry name" value="PH"/>
    <property type="match status" value="1"/>
</dbReference>
<dbReference type="SMART" id="SM00315">
    <property type="entry name" value="RGS"/>
    <property type="match status" value="1"/>
</dbReference>
<dbReference type="SMART" id="SM00133">
    <property type="entry name" value="S_TK_X"/>
    <property type="match status" value="1"/>
</dbReference>
<dbReference type="SMART" id="SM00220">
    <property type="entry name" value="S_TKc"/>
    <property type="match status" value="1"/>
</dbReference>
<dbReference type="SUPFAM" id="SSF50729">
    <property type="entry name" value="PH domain-like"/>
    <property type="match status" value="1"/>
</dbReference>
<dbReference type="SUPFAM" id="SSF56112">
    <property type="entry name" value="Protein kinase-like (PK-like)"/>
    <property type="match status" value="1"/>
</dbReference>
<dbReference type="SUPFAM" id="SSF48097">
    <property type="entry name" value="Regulator of G-protein signaling, RGS"/>
    <property type="match status" value="1"/>
</dbReference>
<dbReference type="PROSITE" id="PS51285">
    <property type="entry name" value="AGC_KINASE_CTER"/>
    <property type="match status" value="1"/>
</dbReference>
<dbReference type="PROSITE" id="PS50003">
    <property type="entry name" value="PH_DOMAIN"/>
    <property type="match status" value="1"/>
</dbReference>
<dbReference type="PROSITE" id="PS00107">
    <property type="entry name" value="PROTEIN_KINASE_ATP"/>
    <property type="match status" value="1"/>
</dbReference>
<dbReference type="PROSITE" id="PS50011">
    <property type="entry name" value="PROTEIN_KINASE_DOM"/>
    <property type="match status" value="1"/>
</dbReference>
<dbReference type="PROSITE" id="PS00108">
    <property type="entry name" value="PROTEIN_KINASE_ST"/>
    <property type="match status" value="1"/>
</dbReference>
<dbReference type="PROSITE" id="PS50132">
    <property type="entry name" value="RGS"/>
    <property type="match status" value="1"/>
</dbReference>
<sequence length="688" mass="79804">MADLEAVLADVSYLMAMEKSKATPAARASKKIVLPEPSIRSVMQKYLEERHEITFDKIFNQRIGFLLFKDFCLNEINEAVPQVKFYEEIKEYEKLENEEDRLCRSRQIYDTYIMKELLSCSHPFSKQAVEHVQSHLSKKQVTSTLFQPYIEEICESLRGSIFQKFMESDKFTRFCQWKNVELNIHLTMNDFSVHRIIGRGGFGEVYGCRKADTGKMYAMKCLDKKRIKMKQGETLALNERIMLSLVSTGDCPFIVCMTYAFHTPDKLCFILDLMNGGDLHYHLSQHGVFSEKEMRFYATEIILGLEHMHNRFVVYRDLKPANILLDEHGHVRISDLGLACDFSKKKPHASVGTHGYMAPEVLQKGTAYDSSADWFSLGCMLFKLLRGHSPFRQHKTKDKHEIDRMTLTMNVELPDVFSPELKSLLEGLLQRDVSKRLGCHGGSAQELKTHDFFRGIDWQHVYLQKYPPPLIPPRGEVNAADAFDIGSFDEEDTKGIKLLDCDQELYKNFPLVISERWQQEVAETVYEAVNADTDKIEARKRAKNKQLGHEEDYALGRDCIVHGYMLKLGNPFLTQWQRRYFYLFPNRLEWRGEGESRQSLLTMEQIVSVEETQIKDKKCILLRIKGGKQFVLQCESDPEFVQWKKELTETFMEAQRLLRRAPKFLNKSRSAVVELSKPPLCHRNSNGL</sequence>
<evidence type="ECO:0000250" key="1">
    <source>
        <dbReference type="UniProtKB" id="P26819"/>
    </source>
</evidence>
<evidence type="ECO:0000250" key="2">
    <source>
        <dbReference type="UniProtKB" id="P35626"/>
    </source>
</evidence>
<evidence type="ECO:0000250" key="3">
    <source>
        <dbReference type="UniProtKB" id="Q3UYH7"/>
    </source>
</evidence>
<evidence type="ECO:0000255" key="4">
    <source>
        <dbReference type="PROSITE-ProRule" id="PRU00145"/>
    </source>
</evidence>
<evidence type="ECO:0000255" key="5">
    <source>
        <dbReference type="PROSITE-ProRule" id="PRU00159"/>
    </source>
</evidence>
<evidence type="ECO:0000255" key="6">
    <source>
        <dbReference type="PROSITE-ProRule" id="PRU00171"/>
    </source>
</evidence>
<evidence type="ECO:0000255" key="7">
    <source>
        <dbReference type="PROSITE-ProRule" id="PRU00618"/>
    </source>
</evidence>
<evidence type="ECO:0000255" key="8">
    <source>
        <dbReference type="PROSITE-ProRule" id="PRU10027"/>
    </source>
</evidence>
<evidence type="ECO:0000305" key="9"/>
<feature type="chain" id="PRO_0000085631" description="G protein-coupled receptor kinase 3">
    <location>
        <begin position="1"/>
        <end position="688"/>
    </location>
</feature>
<feature type="domain" description="RGS" evidence="6">
    <location>
        <begin position="54"/>
        <end position="175"/>
    </location>
</feature>
<feature type="domain" description="Protein kinase" evidence="5">
    <location>
        <begin position="191"/>
        <end position="453"/>
    </location>
</feature>
<feature type="domain" description="AGC-kinase C-terminal" evidence="7">
    <location>
        <begin position="454"/>
        <end position="521"/>
    </location>
</feature>
<feature type="domain" description="PH" evidence="4">
    <location>
        <begin position="558"/>
        <end position="652"/>
    </location>
</feature>
<feature type="region of interest" description="N-terminal">
    <location>
        <begin position="1"/>
        <end position="190"/>
    </location>
</feature>
<feature type="active site" description="Proton acceptor" evidence="5 8">
    <location>
        <position position="317"/>
    </location>
</feature>
<feature type="binding site" evidence="5">
    <location>
        <begin position="197"/>
        <end position="205"/>
    </location>
    <ligand>
        <name>ATP</name>
        <dbReference type="ChEBI" id="CHEBI:30616"/>
    </ligand>
</feature>
<feature type="binding site" evidence="5">
    <location>
        <position position="220"/>
    </location>
    <ligand>
        <name>ATP</name>
        <dbReference type="ChEBI" id="CHEBI:30616"/>
    </ligand>
</feature>
<proteinExistence type="evidence at transcript level"/>
<reference key="1">
    <citation type="journal article" date="1991" name="J. Biol. Chem.">
        <title>Cloning, expression, and chromosomal localization of beta-adrenergic receptor kinase 2. A new member of the receptor kinase family.</title>
        <authorList>
            <person name="Benovic J.L."/>
            <person name="Onorato J.J."/>
            <person name="Arriza J.L."/>
            <person name="Stone W.C."/>
            <person name="Lohse M."/>
            <person name="Jenkins N.A."/>
            <person name="Gilbert D.J."/>
            <person name="Copeland N.G."/>
            <person name="Caron M.G."/>
            <person name="Lefkowitz R.J."/>
        </authorList>
    </citation>
    <scope>NUCLEOTIDE SEQUENCE [MRNA]</scope>
    <source>
        <tissue>Brain</tissue>
    </source>
</reference>
<gene>
    <name evidence="2" type="primary">GRK3</name>
    <name evidence="2" type="synonym">ADRBK2</name>
</gene>
<protein>
    <recommendedName>
        <fullName evidence="3">G protein-coupled receptor kinase 3</fullName>
        <ecNumber evidence="1">2.7.11.15</ecNumber>
    </recommendedName>
    <alternativeName>
        <fullName evidence="1">Beta-adrenergic receptor kinase 2</fullName>
        <shortName evidence="1">Beta-ARK-2</shortName>
    </alternativeName>
</protein>
<keyword id="KW-0067">ATP-binding</keyword>
<keyword id="KW-0966">Cell projection</keyword>
<keyword id="KW-0418">Kinase</keyword>
<keyword id="KW-0547">Nucleotide-binding</keyword>
<keyword id="KW-1185">Reference proteome</keyword>
<keyword id="KW-0723">Serine/threonine-protein kinase</keyword>
<keyword id="KW-0770">Synapse</keyword>
<keyword id="KW-0808">Transferase</keyword>
<keyword id="KW-0832">Ubl conjugation</keyword>